<protein>
    <recommendedName>
        <fullName evidence="1">Chaperonin GroEL 1</fullName>
        <ecNumber evidence="1">5.6.1.7</ecNumber>
    </recommendedName>
    <alternativeName>
        <fullName evidence="1 6">60 kDa chaperonin 1</fullName>
    </alternativeName>
    <alternativeName>
        <fullName evidence="1">Chaperonin-60 1</fullName>
        <shortName evidence="1">Cpn60 1</shortName>
    </alternativeName>
</protein>
<accession>A1KPA8</accession>
<sequence length="539" mass="55877">MSKLIEYDETARRAMEVGMDKLADTVRVTLGPRGRHVVLAKAFGGPTVTNDGVTVAREIELEDPFEDLGAQLVKSVATKTNDVAGDGTTTATILAQALIKGGLRLVAAGVNPIALGVGIGKAADAVSEALLASATPVSGKTGIAQVATVSSRDEQIGDLVGEAMSKVGHDGVVSVEESSTLGTELEFTEGIGFDKGFLSAYFVTDFDNQQAVLEDALILLHQDKISSLPDLLPLLEKVAGTGKPLLIVAEDVEGEALATLVVNAIRKTLKAVAVKGPYFGDRRKAFLEDLAVVTGGQVVNPDAGMVLREVGLEVLGSARRVVVSKDDTVIVDGGGTAEAVANRAKHLRAEIDKSDSDWDREKLGERLAKLAGGVAVIKVGAATETALKERKESVEDAVAAAKAAVEEGIVPGGGASLIHQARKALTELRASLTGDEVLGVDVFSEALAAPLFWIAANAGLDGSVVVNKVSELPAGHGLNVNTLSYGDLAADGVIDPVKVTRSAVLNASSVARMVLTTETVVVDKPAKAEDHDHHHGHAH</sequence>
<proteinExistence type="evidence at protein level"/>
<dbReference type="EC" id="5.6.1.7" evidence="1"/>
<dbReference type="EMBL" id="AM408590">
    <property type="protein sequence ID" value="CAL73476.1"/>
    <property type="molecule type" value="Genomic_DNA"/>
</dbReference>
<dbReference type="SMR" id="A1KPA8"/>
<dbReference type="KEGG" id="mbb:BCG_3487c"/>
<dbReference type="HOGENOM" id="CLU_016503_3_0_11"/>
<dbReference type="Proteomes" id="UP000001472">
    <property type="component" value="Chromosome"/>
</dbReference>
<dbReference type="GO" id="GO:0005737">
    <property type="term" value="C:cytoplasm"/>
    <property type="evidence" value="ECO:0007669"/>
    <property type="project" value="UniProtKB-SubCell"/>
</dbReference>
<dbReference type="GO" id="GO:0005524">
    <property type="term" value="F:ATP binding"/>
    <property type="evidence" value="ECO:0007669"/>
    <property type="project" value="UniProtKB-UniRule"/>
</dbReference>
<dbReference type="GO" id="GO:0140662">
    <property type="term" value="F:ATP-dependent protein folding chaperone"/>
    <property type="evidence" value="ECO:0007669"/>
    <property type="project" value="InterPro"/>
</dbReference>
<dbReference type="GO" id="GO:0016853">
    <property type="term" value="F:isomerase activity"/>
    <property type="evidence" value="ECO:0007669"/>
    <property type="project" value="UniProtKB-KW"/>
</dbReference>
<dbReference type="GO" id="GO:0046872">
    <property type="term" value="F:metal ion binding"/>
    <property type="evidence" value="ECO:0007669"/>
    <property type="project" value="UniProtKB-KW"/>
</dbReference>
<dbReference type="GO" id="GO:0051082">
    <property type="term" value="F:unfolded protein binding"/>
    <property type="evidence" value="ECO:0007669"/>
    <property type="project" value="UniProtKB-UniRule"/>
</dbReference>
<dbReference type="GO" id="GO:0042026">
    <property type="term" value="P:protein refolding"/>
    <property type="evidence" value="ECO:0007669"/>
    <property type="project" value="UniProtKB-UniRule"/>
</dbReference>
<dbReference type="CDD" id="cd03344">
    <property type="entry name" value="GroEL"/>
    <property type="match status" value="1"/>
</dbReference>
<dbReference type="FunFam" id="3.50.7.10:FF:000001">
    <property type="entry name" value="60 kDa chaperonin"/>
    <property type="match status" value="1"/>
</dbReference>
<dbReference type="Gene3D" id="3.50.7.10">
    <property type="entry name" value="GroEL"/>
    <property type="match status" value="1"/>
</dbReference>
<dbReference type="Gene3D" id="1.10.560.10">
    <property type="entry name" value="GroEL-like equatorial domain"/>
    <property type="match status" value="1"/>
</dbReference>
<dbReference type="Gene3D" id="3.30.260.10">
    <property type="entry name" value="TCP-1-like chaperonin intermediate domain"/>
    <property type="match status" value="1"/>
</dbReference>
<dbReference type="HAMAP" id="MF_00600">
    <property type="entry name" value="CH60"/>
    <property type="match status" value="1"/>
</dbReference>
<dbReference type="InterPro" id="IPR018370">
    <property type="entry name" value="Chaperonin_Cpn60_CS"/>
</dbReference>
<dbReference type="InterPro" id="IPR001844">
    <property type="entry name" value="Cpn60/GroEL"/>
</dbReference>
<dbReference type="InterPro" id="IPR002423">
    <property type="entry name" value="Cpn60/GroEL/TCP-1"/>
</dbReference>
<dbReference type="InterPro" id="IPR027409">
    <property type="entry name" value="GroEL-like_apical_dom_sf"/>
</dbReference>
<dbReference type="InterPro" id="IPR027413">
    <property type="entry name" value="GROEL-like_equatorial_sf"/>
</dbReference>
<dbReference type="InterPro" id="IPR027410">
    <property type="entry name" value="TCP-1-like_intermed_sf"/>
</dbReference>
<dbReference type="NCBIfam" id="TIGR02348">
    <property type="entry name" value="GroEL"/>
    <property type="match status" value="1"/>
</dbReference>
<dbReference type="NCBIfam" id="NF000592">
    <property type="entry name" value="PRK00013.1"/>
    <property type="match status" value="1"/>
</dbReference>
<dbReference type="NCBIfam" id="NF009487">
    <property type="entry name" value="PRK12849.1"/>
    <property type="match status" value="1"/>
</dbReference>
<dbReference type="NCBIfam" id="NF009488">
    <property type="entry name" value="PRK12850.1"/>
    <property type="match status" value="1"/>
</dbReference>
<dbReference type="NCBIfam" id="NF009489">
    <property type="entry name" value="PRK12851.1"/>
    <property type="match status" value="1"/>
</dbReference>
<dbReference type="PANTHER" id="PTHR45633">
    <property type="entry name" value="60 KDA HEAT SHOCK PROTEIN, MITOCHONDRIAL"/>
    <property type="match status" value="1"/>
</dbReference>
<dbReference type="Pfam" id="PF00118">
    <property type="entry name" value="Cpn60_TCP1"/>
    <property type="match status" value="1"/>
</dbReference>
<dbReference type="PRINTS" id="PR00298">
    <property type="entry name" value="CHAPERONIN60"/>
</dbReference>
<dbReference type="SUPFAM" id="SSF52029">
    <property type="entry name" value="GroEL apical domain-like"/>
    <property type="match status" value="1"/>
</dbReference>
<dbReference type="SUPFAM" id="SSF48592">
    <property type="entry name" value="GroEL equatorial domain-like"/>
    <property type="match status" value="1"/>
</dbReference>
<dbReference type="SUPFAM" id="SSF54849">
    <property type="entry name" value="GroEL-intermediate domain like"/>
    <property type="match status" value="1"/>
</dbReference>
<dbReference type="PROSITE" id="PS00296">
    <property type="entry name" value="CHAPERONINS_CPN60"/>
    <property type="match status" value="1"/>
</dbReference>
<feature type="chain" id="PRO_0000332015" description="Chaperonin GroEL 1">
    <location>
        <begin position="1"/>
        <end position="539"/>
    </location>
</feature>
<feature type="binding site" evidence="1">
    <location>
        <begin position="29"/>
        <end position="32"/>
    </location>
    <ligand>
        <name>ATP</name>
        <dbReference type="ChEBI" id="CHEBI:30616"/>
    </ligand>
</feature>
<feature type="binding site" evidence="1">
    <location>
        <begin position="86"/>
        <end position="90"/>
    </location>
    <ligand>
        <name>ATP</name>
        <dbReference type="ChEBI" id="CHEBI:30616"/>
    </ligand>
</feature>
<feature type="binding site" evidence="1">
    <location>
        <position position="413"/>
    </location>
    <ligand>
        <name>ATP</name>
        <dbReference type="ChEBI" id="CHEBI:30616"/>
    </ligand>
</feature>
<feature type="binding site" evidence="1">
    <location>
        <position position="495"/>
    </location>
    <ligand>
        <name>ATP</name>
        <dbReference type="ChEBI" id="CHEBI:30616"/>
    </ligand>
</feature>
<feature type="mutagenesis site" description="Cannot bind copper." evidence="4">
    <location>
        <begin position="531"/>
        <end position="539"/>
    </location>
</feature>
<evidence type="ECO:0000255" key="1">
    <source>
        <dbReference type="HAMAP-Rule" id="MF_00600"/>
    </source>
</evidence>
<evidence type="ECO:0000269" key="2">
    <source>
    </source>
</evidence>
<evidence type="ECO:0000269" key="3">
    <source>
    </source>
</evidence>
<evidence type="ECO:0000269" key="4">
    <source>
    </source>
</evidence>
<evidence type="ECO:0000303" key="5">
    <source>
    </source>
</evidence>
<evidence type="ECO:0000305" key="6"/>
<gene>
    <name evidence="1" type="primary">groEL1</name>
    <name evidence="5" type="synonym">cpn60.1</name>
    <name evidence="1" type="synonym">groL1</name>
    <name type="ordered locus">BCG_3487c</name>
</gene>
<reference key="1">
    <citation type="journal article" date="2007" name="Proc. Natl. Acad. Sci. U.S.A.">
        <title>Genome plasticity of BCG and impact on vaccine efficacy.</title>
        <authorList>
            <person name="Brosch R."/>
            <person name="Gordon S.V."/>
            <person name="Garnier T."/>
            <person name="Eiglmeier K."/>
            <person name="Frigui W."/>
            <person name="Valenti P."/>
            <person name="Dos Santos S."/>
            <person name="Duthoy S."/>
            <person name="Lacroix C."/>
            <person name="Garcia-Pelayo C."/>
            <person name="Inwald J.K."/>
            <person name="Golby P."/>
            <person name="Garcia J.N."/>
            <person name="Hewinson R.G."/>
            <person name="Behr M.A."/>
            <person name="Quail M.A."/>
            <person name="Churcher C."/>
            <person name="Barrell B.G."/>
            <person name="Parkhill J."/>
            <person name="Cole S.T."/>
        </authorList>
    </citation>
    <scope>NUCLEOTIDE SEQUENCE [LARGE SCALE GENOMIC DNA]</scope>
    <source>
        <strain>BCG / Pasteur 1173P2</strain>
    </source>
</reference>
<reference key="2">
    <citation type="journal article" date="2010" name="Protein Cell">
        <title>Identification of four novel DC-SIGN ligands on Mycobacterium bovis BCG.</title>
        <authorList>
            <person name="Carroll M.V."/>
            <person name="Sim R.B."/>
            <person name="Bigi F."/>
            <person name="Jaekel A."/>
            <person name="Antrobus R."/>
            <person name="Mitchell D.A."/>
        </authorList>
    </citation>
    <scope>FUNCTION</scope>
    <scope>IDENTIFICATION BY MASS SPECTROMETRY</scope>
    <scope>INTERACTION WITH HUMAN CD209</scope>
    <source>
        <strain>BCG / Pasteur 1173P2</strain>
    </source>
</reference>
<reference key="3">
    <citation type="journal article" date="2019" name="Front. Microbiol.">
        <title>Cpn60.1 (GroEL1) contributes to mycobacterial crabtree effect: implications for biofilm formation.</title>
        <authorList>
            <person name="Zeng S."/>
            <person name="Constant P."/>
            <person name="Yang D."/>
            <person name="Baulard A."/>
            <person name="Lefevre P."/>
            <person name="Daffe M."/>
            <person name="Wattiez R."/>
            <person name="Fontaine V."/>
        </authorList>
    </citation>
    <scope>DISRUPTION PHENOTYPE</scope>
    <source>
        <strain>BCG</strain>
    </source>
</reference>
<reference key="4">
    <citation type="journal article" date="2020" name="Metallomics">
        <title>Interplays between copper and Mycobacterium tuberculosis GroEL1.</title>
        <authorList>
            <person name="Yang D."/>
            <person name="Klebl D.P."/>
            <person name="Zeng S."/>
            <person name="Sobott F."/>
            <person name="Prevost M."/>
            <person name="Soumillion P."/>
            <person name="Vandenbussche G."/>
            <person name="Fontaine V."/>
        </authorList>
    </citation>
    <scope>FUNCTION</scope>
    <scope>DISRUPTION PHENOTYPE</scope>
    <scope>MUTAGENESIS OF 531-HIS--HIS-539</scope>
    <source>
        <strain>BCG</strain>
    </source>
</reference>
<keyword id="KW-0067">ATP-binding</keyword>
<keyword id="KW-0143">Chaperone</keyword>
<keyword id="KW-0186">Copper</keyword>
<keyword id="KW-0963">Cytoplasm</keyword>
<keyword id="KW-0413">Isomerase</keyword>
<keyword id="KW-0479">Metal-binding</keyword>
<keyword id="KW-0547">Nucleotide-binding</keyword>
<organism>
    <name type="scientific">Mycobacterium bovis (strain BCG / Pasteur 1173P2)</name>
    <dbReference type="NCBI Taxonomy" id="410289"/>
    <lineage>
        <taxon>Bacteria</taxon>
        <taxon>Bacillati</taxon>
        <taxon>Actinomycetota</taxon>
        <taxon>Actinomycetes</taxon>
        <taxon>Mycobacteriales</taxon>
        <taxon>Mycobacteriaceae</taxon>
        <taxon>Mycobacterium</taxon>
        <taxon>Mycobacterium tuberculosis complex</taxon>
    </lineage>
</organism>
<name>CH601_MYCBP</name>
<comment type="function">
    <text evidence="1">Together with its co-chaperonin GroES, plays an essential role in assisting protein folding. The GroEL-GroES system forms a nano-cage that allows encapsulation of the non-native substrate proteins and provides a physical environment optimized to promote and accelerate protein folding.</text>
</comment>
<comment type="function">
    <text evidence="2 4">Involved in copper homeostasis (PubMed:32812602). Binds copper and may help maintaining copper homeostasis when copper is present in excess, notably in the macrophage phagosome, by acting as a metal storage protein (PubMed:32812602). Increases copper tolerance during biofilm formation (PubMed:32812602). In vitro binds to human CD209 (DC-SIGN) and may help mediate adherence to host cells (PubMed:21203928).</text>
</comment>
<comment type="catalytic activity">
    <reaction evidence="1">
        <text>ATP + H2O + a folded polypeptide = ADP + phosphate + an unfolded polypeptide.</text>
        <dbReference type="EC" id="5.6.1.7"/>
    </reaction>
</comment>
<comment type="subunit">
    <text evidence="1 2">Forms a cylinder of 14 subunits composed of two heptameric rings stacked back-to-back. Interacts with the co-chaperonin GroES (By similarity). Able to bind to host (human) CD209 in vitro (PubMed:21203928).</text>
</comment>
<comment type="subcellular location">
    <subcellularLocation>
        <location evidence="1">Cytoplasm</location>
    </subcellularLocation>
    <text evidence="2">Although thought of as a cytoplasmic chaperone this protein has been found to interact in vitro with a host extracellular protein.</text>
</comment>
<comment type="disruption phenotype">
    <text evidence="3 4">In the standard Sauton's medium containing 6% glycerol, disruption mutant displays poor growth and very poor biofilm phenotype with no full attachment on the medium-air interface at day 35 (PubMed:31244785). Mutant shows abnormal Crabtree effect. Mutant has a compromised ability to down-regulate ATP and secretes more pyruvate, acetate, succinate, and glutamate in the culture medium. Mutant has higher intracellular pyruvate and produces more toxic methylglyoxal, suggesting a glycolytic stress leading to growth stasis and consequently biofilm failure (PubMed:31244785). Deletion of the gene enhances copper susceptibility during biofilm growth (PubMed:32812602).</text>
</comment>
<comment type="similarity">
    <text evidence="1">Belongs to the chaperonin (HSP60) family.</text>
</comment>